<sequence>MVDVNRFKSMQITLASPSKVRSWSYGEVKKPETINYRTLKPEREGLFDEVIFGPTKDWECACGKYKRIRYKGIICDRCGVEVTRAKVRRERMGHIELKAPVSHIWYFKGIPSRMGLTLDMSPRALEEVIYFAAYVVIDPMDTPLEPKSLLTEREYREKLQEYGYGSFVAKMGAEAIQDLLKRVDLDAEIAVLKEELKSATGQKRVKAVRRLDVLDAFKKSGNKPEWMVLNILPVIPPDLRPMVQLDGGRFAASDLNDLYRRVINRNNRLARLLELNAPGIIVQNEKRMLQEAVDALIDNGRRGRPITGPGSRPLKSLSHMLKGKQGRFRQNLLGKRVDFSGRSVIAVGPTLKMYQCGVPREMAIELFKPFVMREIVARDLAGNVKAAKRMVERGDERIWDILEEVIKEHPVLLNRAPTLHRLGIQAFEPVLIDGKALRLHPLVCEAYNADFDGDQMAIHVPLSEEAQAEARLLMLAAEHILNPKDGKPVVTPSQDMVLGNYYLTMEDAGREGEGMIFKDHDEAVMAYQNGYVHLHTRVGIAVDSMPNKPWTEEQKHKIMVTTVGKILFNDIMPEDLPYLIEPNNANLTEKTPDKYFLEPGQDIQAVIDNLEINIPFKKKNLGNIIAETFKRFRTTETSAFLDRLKDLGYYHSTLAGLTVGIADIPVIDNKAEIIDAAHHRVEDINKAFRRGLMTEEDRYVAVTTTWREAKEALEKRLIETQDPKNPIVMMMDSGARGNISNFSQLAGMRGLMAAPNGRIMELPILSNFREGLSVLEMFFSTHGARKGMTDTALKTADSGYLTRRLVDVAQDVIIREDDCGTDRGLTITAITDGKEVTETLEERLIGRYTKKSIKHPETGEILVGADTLITEDMAAKVVKAGVEEVTIRSVFTCNTRHGVCRHCYGINLATGDAVEVGEAVGTIAAQSIGEPGTQLTMRTFHTGGVASNTDITQGLPRIQEIFEARNPKGEAVITEVKGEVVAIEEDSSTRTKKVFVKGQTGEGEYVVPFTARMKVEVGDEVARGAALTEGSIQPKRLLEVRDTLSVETYLLAEVQKVYRSQGVEIGDKHVEVMVRQMLRKVRVMDPGDTDLLPGTLMDISDFTDANKDIVISGGIPATSRPVLMGITKASLETNSFLSAASFQETTRVLTDAAIRGKKDHLLGLKENVIIGKIIPAGTGMARYRNIEPLAVNEVEIIEGTPVDAEVTEVSTPTTED</sequence>
<evidence type="ECO:0000255" key="1">
    <source>
        <dbReference type="HAMAP-Rule" id="MF_01322"/>
    </source>
</evidence>
<dbReference type="EC" id="2.7.7.6" evidence="1"/>
<dbReference type="EMBL" id="AL766844">
    <property type="protein sequence ID" value="CAD45802.1"/>
    <property type="molecule type" value="Genomic_DNA"/>
</dbReference>
<dbReference type="RefSeq" id="WP_000228729.1">
    <property type="nucleotide sequence ID" value="NC_004368.1"/>
</dbReference>
<dbReference type="SMR" id="Q8E7J7"/>
<dbReference type="GeneID" id="66885142"/>
<dbReference type="KEGG" id="san:rpoC"/>
<dbReference type="eggNOG" id="COG0086">
    <property type="taxonomic scope" value="Bacteria"/>
</dbReference>
<dbReference type="HOGENOM" id="CLU_000524_3_1_9"/>
<dbReference type="Proteomes" id="UP000000823">
    <property type="component" value="Chromosome"/>
</dbReference>
<dbReference type="GO" id="GO:0000428">
    <property type="term" value="C:DNA-directed RNA polymerase complex"/>
    <property type="evidence" value="ECO:0007669"/>
    <property type="project" value="UniProtKB-KW"/>
</dbReference>
<dbReference type="GO" id="GO:0003677">
    <property type="term" value="F:DNA binding"/>
    <property type="evidence" value="ECO:0007669"/>
    <property type="project" value="UniProtKB-UniRule"/>
</dbReference>
<dbReference type="GO" id="GO:0003899">
    <property type="term" value="F:DNA-directed RNA polymerase activity"/>
    <property type="evidence" value="ECO:0007669"/>
    <property type="project" value="UniProtKB-UniRule"/>
</dbReference>
<dbReference type="GO" id="GO:0000287">
    <property type="term" value="F:magnesium ion binding"/>
    <property type="evidence" value="ECO:0007669"/>
    <property type="project" value="UniProtKB-UniRule"/>
</dbReference>
<dbReference type="GO" id="GO:0008270">
    <property type="term" value="F:zinc ion binding"/>
    <property type="evidence" value="ECO:0007669"/>
    <property type="project" value="UniProtKB-UniRule"/>
</dbReference>
<dbReference type="GO" id="GO:0006351">
    <property type="term" value="P:DNA-templated transcription"/>
    <property type="evidence" value="ECO:0007669"/>
    <property type="project" value="UniProtKB-UniRule"/>
</dbReference>
<dbReference type="CDD" id="cd02655">
    <property type="entry name" value="RNAP_beta'_C"/>
    <property type="match status" value="1"/>
</dbReference>
<dbReference type="CDD" id="cd01609">
    <property type="entry name" value="RNAP_beta'_N"/>
    <property type="match status" value="1"/>
</dbReference>
<dbReference type="FunFam" id="1.10.150.390:FF:000002">
    <property type="entry name" value="DNA-directed RNA polymerase subunit beta"/>
    <property type="match status" value="1"/>
</dbReference>
<dbReference type="FunFam" id="4.10.860.120:FF:000001">
    <property type="entry name" value="DNA-directed RNA polymerase subunit beta"/>
    <property type="match status" value="1"/>
</dbReference>
<dbReference type="Gene3D" id="1.10.132.30">
    <property type="match status" value="1"/>
</dbReference>
<dbReference type="Gene3D" id="1.10.150.390">
    <property type="match status" value="1"/>
</dbReference>
<dbReference type="Gene3D" id="1.10.1790.20">
    <property type="match status" value="1"/>
</dbReference>
<dbReference type="Gene3D" id="1.10.40.90">
    <property type="match status" value="1"/>
</dbReference>
<dbReference type="Gene3D" id="2.40.40.20">
    <property type="match status" value="1"/>
</dbReference>
<dbReference type="Gene3D" id="2.40.50.100">
    <property type="match status" value="1"/>
</dbReference>
<dbReference type="Gene3D" id="4.10.860.120">
    <property type="entry name" value="RNA polymerase II, clamp domain"/>
    <property type="match status" value="1"/>
</dbReference>
<dbReference type="Gene3D" id="1.10.274.100">
    <property type="entry name" value="RNA polymerase Rpb1, domain 3"/>
    <property type="match status" value="1"/>
</dbReference>
<dbReference type="HAMAP" id="MF_01322">
    <property type="entry name" value="RNApol_bact_RpoC"/>
    <property type="match status" value="1"/>
</dbReference>
<dbReference type="InterPro" id="IPR045867">
    <property type="entry name" value="DNA-dir_RpoC_beta_prime"/>
</dbReference>
<dbReference type="InterPro" id="IPR012754">
    <property type="entry name" value="DNA-dir_RpoC_beta_prime_bact"/>
</dbReference>
<dbReference type="InterPro" id="IPR000722">
    <property type="entry name" value="RNA_pol_asu"/>
</dbReference>
<dbReference type="InterPro" id="IPR006592">
    <property type="entry name" value="RNA_pol_N"/>
</dbReference>
<dbReference type="InterPro" id="IPR007080">
    <property type="entry name" value="RNA_pol_Rpb1_1"/>
</dbReference>
<dbReference type="InterPro" id="IPR007066">
    <property type="entry name" value="RNA_pol_Rpb1_3"/>
</dbReference>
<dbReference type="InterPro" id="IPR042102">
    <property type="entry name" value="RNA_pol_Rpb1_3_sf"/>
</dbReference>
<dbReference type="InterPro" id="IPR007083">
    <property type="entry name" value="RNA_pol_Rpb1_4"/>
</dbReference>
<dbReference type="InterPro" id="IPR007081">
    <property type="entry name" value="RNA_pol_Rpb1_5"/>
</dbReference>
<dbReference type="InterPro" id="IPR044893">
    <property type="entry name" value="RNA_pol_Rpb1_clamp_domain"/>
</dbReference>
<dbReference type="InterPro" id="IPR038120">
    <property type="entry name" value="Rpb1_funnel_sf"/>
</dbReference>
<dbReference type="NCBIfam" id="TIGR02386">
    <property type="entry name" value="rpoC_TIGR"/>
    <property type="match status" value="1"/>
</dbReference>
<dbReference type="PANTHER" id="PTHR19376">
    <property type="entry name" value="DNA-DIRECTED RNA POLYMERASE"/>
    <property type="match status" value="1"/>
</dbReference>
<dbReference type="PANTHER" id="PTHR19376:SF54">
    <property type="entry name" value="DNA-DIRECTED RNA POLYMERASE SUBUNIT BETA"/>
    <property type="match status" value="1"/>
</dbReference>
<dbReference type="Pfam" id="PF04997">
    <property type="entry name" value="RNA_pol_Rpb1_1"/>
    <property type="match status" value="1"/>
</dbReference>
<dbReference type="Pfam" id="PF00623">
    <property type="entry name" value="RNA_pol_Rpb1_2"/>
    <property type="match status" value="1"/>
</dbReference>
<dbReference type="Pfam" id="PF04983">
    <property type="entry name" value="RNA_pol_Rpb1_3"/>
    <property type="match status" value="1"/>
</dbReference>
<dbReference type="Pfam" id="PF05000">
    <property type="entry name" value="RNA_pol_Rpb1_4"/>
    <property type="match status" value="1"/>
</dbReference>
<dbReference type="Pfam" id="PF04998">
    <property type="entry name" value="RNA_pol_Rpb1_5"/>
    <property type="match status" value="1"/>
</dbReference>
<dbReference type="SMART" id="SM00663">
    <property type="entry name" value="RPOLA_N"/>
    <property type="match status" value="1"/>
</dbReference>
<dbReference type="SUPFAM" id="SSF64484">
    <property type="entry name" value="beta and beta-prime subunits of DNA dependent RNA-polymerase"/>
    <property type="match status" value="1"/>
</dbReference>
<keyword id="KW-0240">DNA-directed RNA polymerase</keyword>
<keyword id="KW-0460">Magnesium</keyword>
<keyword id="KW-0479">Metal-binding</keyword>
<keyword id="KW-0548">Nucleotidyltransferase</keyword>
<keyword id="KW-0804">Transcription</keyword>
<keyword id="KW-0808">Transferase</keyword>
<keyword id="KW-0862">Zinc</keyword>
<organism>
    <name type="scientific">Streptococcus agalactiae serotype III (strain NEM316)</name>
    <dbReference type="NCBI Taxonomy" id="211110"/>
    <lineage>
        <taxon>Bacteria</taxon>
        <taxon>Bacillati</taxon>
        <taxon>Bacillota</taxon>
        <taxon>Bacilli</taxon>
        <taxon>Lactobacillales</taxon>
        <taxon>Streptococcaceae</taxon>
        <taxon>Streptococcus</taxon>
    </lineage>
</organism>
<name>RPOC_STRA3</name>
<reference key="1">
    <citation type="journal article" date="2002" name="Mol. Microbiol.">
        <title>Genome sequence of Streptococcus agalactiae, a pathogen causing invasive neonatal disease.</title>
        <authorList>
            <person name="Glaser P."/>
            <person name="Rusniok C."/>
            <person name="Buchrieser C."/>
            <person name="Chevalier F."/>
            <person name="Frangeul L."/>
            <person name="Msadek T."/>
            <person name="Zouine M."/>
            <person name="Couve E."/>
            <person name="Lalioui L."/>
            <person name="Poyart C."/>
            <person name="Trieu-Cuot P."/>
            <person name="Kunst F."/>
        </authorList>
    </citation>
    <scope>NUCLEOTIDE SEQUENCE [LARGE SCALE GENOMIC DNA]</scope>
    <source>
        <strain>NEM316</strain>
    </source>
</reference>
<comment type="function">
    <text evidence="1">DNA-dependent RNA polymerase catalyzes the transcription of DNA into RNA using the four ribonucleoside triphosphates as substrates.</text>
</comment>
<comment type="catalytic activity">
    <reaction evidence="1">
        <text>RNA(n) + a ribonucleoside 5'-triphosphate = RNA(n+1) + diphosphate</text>
        <dbReference type="Rhea" id="RHEA:21248"/>
        <dbReference type="Rhea" id="RHEA-COMP:14527"/>
        <dbReference type="Rhea" id="RHEA-COMP:17342"/>
        <dbReference type="ChEBI" id="CHEBI:33019"/>
        <dbReference type="ChEBI" id="CHEBI:61557"/>
        <dbReference type="ChEBI" id="CHEBI:140395"/>
        <dbReference type="EC" id="2.7.7.6"/>
    </reaction>
</comment>
<comment type="cofactor">
    <cofactor evidence="1">
        <name>Mg(2+)</name>
        <dbReference type="ChEBI" id="CHEBI:18420"/>
    </cofactor>
    <text evidence="1">Binds 1 Mg(2+) ion per subunit.</text>
</comment>
<comment type="cofactor">
    <cofactor evidence="1">
        <name>Zn(2+)</name>
        <dbReference type="ChEBI" id="CHEBI:29105"/>
    </cofactor>
    <text evidence="1">Binds 2 Zn(2+) ions per subunit.</text>
</comment>
<comment type="subunit">
    <text evidence="1">The RNAP catalytic core consists of 2 alpha, 1 beta, 1 beta' and 1 omega subunit. When a sigma factor is associated with the core the holoenzyme is formed, which can initiate transcription.</text>
</comment>
<comment type="similarity">
    <text evidence="1">Belongs to the RNA polymerase beta' chain family.</text>
</comment>
<proteinExistence type="inferred from homology"/>
<gene>
    <name evidence="1" type="primary">rpoC</name>
    <name type="ordered locus">gbs0157</name>
</gene>
<accession>Q8E7J7</accession>
<feature type="chain" id="PRO_0000067803" description="DNA-directed RNA polymerase subunit beta'">
    <location>
        <begin position="1"/>
        <end position="1216"/>
    </location>
</feature>
<feature type="binding site" evidence="1">
    <location>
        <position position="60"/>
    </location>
    <ligand>
        <name>Zn(2+)</name>
        <dbReference type="ChEBI" id="CHEBI:29105"/>
        <label>1</label>
    </ligand>
</feature>
<feature type="binding site" evidence="1">
    <location>
        <position position="62"/>
    </location>
    <ligand>
        <name>Zn(2+)</name>
        <dbReference type="ChEBI" id="CHEBI:29105"/>
        <label>1</label>
    </ligand>
</feature>
<feature type="binding site" evidence="1">
    <location>
        <position position="75"/>
    </location>
    <ligand>
        <name>Zn(2+)</name>
        <dbReference type="ChEBI" id="CHEBI:29105"/>
        <label>1</label>
    </ligand>
</feature>
<feature type="binding site" evidence="1">
    <location>
        <position position="78"/>
    </location>
    <ligand>
        <name>Zn(2+)</name>
        <dbReference type="ChEBI" id="CHEBI:29105"/>
        <label>1</label>
    </ligand>
</feature>
<feature type="binding site" evidence="1">
    <location>
        <position position="450"/>
    </location>
    <ligand>
        <name>Mg(2+)</name>
        <dbReference type="ChEBI" id="CHEBI:18420"/>
    </ligand>
</feature>
<feature type="binding site" evidence="1">
    <location>
        <position position="452"/>
    </location>
    <ligand>
        <name>Mg(2+)</name>
        <dbReference type="ChEBI" id="CHEBI:18420"/>
    </ligand>
</feature>
<feature type="binding site" evidence="1">
    <location>
        <position position="454"/>
    </location>
    <ligand>
        <name>Mg(2+)</name>
        <dbReference type="ChEBI" id="CHEBI:18420"/>
    </ligand>
</feature>
<feature type="binding site" evidence="1">
    <location>
        <position position="819"/>
    </location>
    <ligand>
        <name>Zn(2+)</name>
        <dbReference type="ChEBI" id="CHEBI:29105"/>
        <label>2</label>
    </ligand>
</feature>
<feature type="binding site" evidence="1">
    <location>
        <position position="893"/>
    </location>
    <ligand>
        <name>Zn(2+)</name>
        <dbReference type="ChEBI" id="CHEBI:29105"/>
        <label>2</label>
    </ligand>
</feature>
<feature type="binding site" evidence="1">
    <location>
        <position position="900"/>
    </location>
    <ligand>
        <name>Zn(2+)</name>
        <dbReference type="ChEBI" id="CHEBI:29105"/>
        <label>2</label>
    </ligand>
</feature>
<feature type="binding site" evidence="1">
    <location>
        <position position="903"/>
    </location>
    <ligand>
        <name>Zn(2+)</name>
        <dbReference type="ChEBI" id="CHEBI:29105"/>
        <label>2</label>
    </ligand>
</feature>
<protein>
    <recommendedName>
        <fullName evidence="1">DNA-directed RNA polymerase subunit beta'</fullName>
        <shortName evidence="1">RNAP subunit beta'</shortName>
        <ecNumber evidence="1">2.7.7.6</ecNumber>
    </recommendedName>
    <alternativeName>
        <fullName evidence="1">RNA polymerase subunit beta'</fullName>
    </alternativeName>
    <alternativeName>
        <fullName evidence="1">Transcriptase subunit beta'</fullName>
    </alternativeName>
</protein>